<feature type="chain" id="PRO_0000434435" description="Glucose-6-phosphate 1-dehydrogenase">
    <location>
        <begin position="1"/>
        <end position="489"/>
    </location>
</feature>
<feature type="active site" description="Proton acceptor" evidence="1">
    <location>
        <position position="243"/>
    </location>
</feature>
<feature type="binding site" evidence="1">
    <location>
        <position position="50"/>
    </location>
    <ligand>
        <name>NADP(+)</name>
        <dbReference type="ChEBI" id="CHEBI:58349"/>
    </ligand>
</feature>
<feature type="binding site" evidence="1">
    <location>
        <position position="151"/>
    </location>
    <ligand>
        <name>NADP(+)</name>
        <dbReference type="ChEBI" id="CHEBI:58349"/>
    </ligand>
</feature>
<feature type="binding site" evidence="1">
    <location>
        <position position="181"/>
    </location>
    <ligand>
        <name>substrate</name>
    </ligand>
</feature>
<feature type="binding site" evidence="1">
    <location>
        <position position="185"/>
    </location>
    <ligand>
        <name>substrate</name>
    </ligand>
</feature>
<feature type="binding site" evidence="1">
    <location>
        <position position="219"/>
    </location>
    <ligand>
        <name>substrate</name>
    </ligand>
</feature>
<feature type="binding site" evidence="1">
    <location>
        <position position="238"/>
    </location>
    <ligand>
        <name>substrate</name>
    </ligand>
</feature>
<feature type="binding site" evidence="1">
    <location>
        <position position="341"/>
    </location>
    <ligand>
        <name>substrate</name>
    </ligand>
</feature>
<feature type="binding site" evidence="1">
    <location>
        <position position="346"/>
    </location>
    <ligand>
        <name>substrate</name>
    </ligand>
</feature>
<organism>
    <name type="scientific">Gluconobacter oxydans (strain 621H)</name>
    <name type="common">Gluconobacter suboxydans</name>
    <dbReference type="NCBI Taxonomy" id="290633"/>
    <lineage>
        <taxon>Bacteria</taxon>
        <taxon>Pseudomonadati</taxon>
        <taxon>Pseudomonadota</taxon>
        <taxon>Alphaproteobacteria</taxon>
        <taxon>Acetobacterales</taxon>
        <taxon>Acetobacteraceae</taxon>
        <taxon>Gluconobacter</taxon>
    </lineage>
</organism>
<protein>
    <recommendedName>
        <fullName evidence="1 3">Glucose-6-phosphate 1-dehydrogenase</fullName>
        <shortName evidence="1">G6PD</shortName>
        <shortName evidence="3">G6PDH</shortName>
        <ecNumber evidence="1 2">1.1.1.49</ecNumber>
    </recommendedName>
</protein>
<comment type="function">
    <text evidence="1 2">Catalyzes the oxidation of glucose 6-phosphate to 6-phosphogluconolactone.</text>
</comment>
<comment type="catalytic activity">
    <reaction evidence="1 2">
        <text>D-glucose 6-phosphate + NADP(+) = 6-phospho-D-glucono-1,5-lactone + NADPH + H(+)</text>
        <dbReference type="Rhea" id="RHEA:15841"/>
        <dbReference type="ChEBI" id="CHEBI:15378"/>
        <dbReference type="ChEBI" id="CHEBI:57783"/>
        <dbReference type="ChEBI" id="CHEBI:57955"/>
        <dbReference type="ChEBI" id="CHEBI:58349"/>
        <dbReference type="ChEBI" id="CHEBI:61548"/>
        <dbReference type="EC" id="1.1.1.49"/>
    </reaction>
</comment>
<comment type="biophysicochemical properties">
    <kinetics>
        <KM evidence="2">0.28 mM for glucose 6-phosphate</KM>
        <KM evidence="2">26.4 uM for NADP(+)</KM>
        <KM evidence="2">740 uM for NAD(+)</KM>
        <Vmax evidence="2">47.6 umol/min/mg enzyme</Vmax>
        <text evidence="2">kcat is 44.1 sec(-1). Can use NAD or NADP in vitro, but primarily functions in a NADP-dependent manner in vivo.</text>
    </kinetics>
</comment>
<comment type="pathway">
    <text evidence="1 4">Carbohydrate degradation; pentose phosphate pathway; D-ribulose 5-phosphate from D-glucose 6-phosphate (oxidative stage): step 1/3.</text>
</comment>
<comment type="subunit">
    <text evidence="2">Homodimer.</text>
</comment>
<comment type="similarity">
    <text evidence="1">Belongs to the glucose-6-phosphate dehydrogenase family.</text>
</comment>
<evidence type="ECO:0000255" key="1">
    <source>
        <dbReference type="HAMAP-Rule" id="MF_00966"/>
    </source>
</evidence>
<evidence type="ECO:0000269" key="2">
    <source>
    </source>
</evidence>
<evidence type="ECO:0000303" key="3">
    <source>
    </source>
</evidence>
<evidence type="ECO:0000305" key="4">
    <source>
    </source>
</evidence>
<evidence type="ECO:0000312" key="5">
    <source>
        <dbReference type="EMBL" id="AAW59938.1"/>
    </source>
</evidence>
<keyword id="KW-0119">Carbohydrate metabolism</keyword>
<keyword id="KW-0313">Glucose metabolism</keyword>
<keyword id="KW-0521">NADP</keyword>
<keyword id="KW-0560">Oxidoreductase</keyword>
<keyword id="KW-1185">Reference proteome</keyword>
<name>G6PD_GLUOX</name>
<gene>
    <name evidence="1" type="primary">zwf</name>
    <name evidence="5" type="ordered locus">GOX0145</name>
</gene>
<dbReference type="EC" id="1.1.1.49" evidence="1 2"/>
<dbReference type="EMBL" id="CP000009">
    <property type="protein sequence ID" value="AAW59938.1"/>
    <property type="molecule type" value="Genomic_DNA"/>
</dbReference>
<dbReference type="RefSeq" id="WP_011251741.1">
    <property type="nucleotide sequence ID" value="NC_006677.1"/>
</dbReference>
<dbReference type="SMR" id="Q5FUK8"/>
<dbReference type="STRING" id="290633.GOX0145"/>
<dbReference type="KEGG" id="gox:GOX0145"/>
<dbReference type="eggNOG" id="COG0364">
    <property type="taxonomic scope" value="Bacteria"/>
</dbReference>
<dbReference type="HOGENOM" id="CLU_013524_5_0_5"/>
<dbReference type="UniPathway" id="UPA00115">
    <property type="reaction ID" value="UER00408"/>
</dbReference>
<dbReference type="Proteomes" id="UP000006375">
    <property type="component" value="Chromosome"/>
</dbReference>
<dbReference type="GO" id="GO:0005829">
    <property type="term" value="C:cytosol"/>
    <property type="evidence" value="ECO:0007669"/>
    <property type="project" value="TreeGrafter"/>
</dbReference>
<dbReference type="GO" id="GO:0004345">
    <property type="term" value="F:glucose-6-phosphate dehydrogenase activity"/>
    <property type="evidence" value="ECO:0007669"/>
    <property type="project" value="UniProtKB-UniRule"/>
</dbReference>
<dbReference type="GO" id="GO:0050661">
    <property type="term" value="F:NADP binding"/>
    <property type="evidence" value="ECO:0007669"/>
    <property type="project" value="UniProtKB-UniRule"/>
</dbReference>
<dbReference type="GO" id="GO:0006006">
    <property type="term" value="P:glucose metabolic process"/>
    <property type="evidence" value="ECO:0007669"/>
    <property type="project" value="UniProtKB-KW"/>
</dbReference>
<dbReference type="GO" id="GO:0009051">
    <property type="term" value="P:pentose-phosphate shunt, oxidative branch"/>
    <property type="evidence" value="ECO:0007669"/>
    <property type="project" value="TreeGrafter"/>
</dbReference>
<dbReference type="Gene3D" id="3.30.360.10">
    <property type="entry name" value="Dihydrodipicolinate Reductase, domain 2"/>
    <property type="match status" value="1"/>
</dbReference>
<dbReference type="Gene3D" id="3.40.50.720">
    <property type="entry name" value="NAD(P)-binding Rossmann-like Domain"/>
    <property type="match status" value="1"/>
</dbReference>
<dbReference type="HAMAP" id="MF_00966">
    <property type="entry name" value="G6PD"/>
    <property type="match status" value="1"/>
</dbReference>
<dbReference type="InterPro" id="IPR001282">
    <property type="entry name" value="G6P_DH"/>
</dbReference>
<dbReference type="InterPro" id="IPR019796">
    <property type="entry name" value="G6P_DH_AS"/>
</dbReference>
<dbReference type="InterPro" id="IPR022675">
    <property type="entry name" value="G6P_DH_C"/>
</dbReference>
<dbReference type="InterPro" id="IPR022674">
    <property type="entry name" value="G6P_DH_NAD-bd"/>
</dbReference>
<dbReference type="InterPro" id="IPR036291">
    <property type="entry name" value="NAD(P)-bd_dom_sf"/>
</dbReference>
<dbReference type="NCBIfam" id="TIGR00871">
    <property type="entry name" value="zwf"/>
    <property type="match status" value="1"/>
</dbReference>
<dbReference type="PANTHER" id="PTHR23429:SF0">
    <property type="entry name" value="GLUCOSE-6-PHOSPHATE 1-DEHYDROGENASE"/>
    <property type="match status" value="1"/>
</dbReference>
<dbReference type="PANTHER" id="PTHR23429">
    <property type="entry name" value="GLUCOSE-6-PHOSPHATE 1-DEHYDROGENASE G6PD"/>
    <property type="match status" value="1"/>
</dbReference>
<dbReference type="Pfam" id="PF02781">
    <property type="entry name" value="G6PD_C"/>
    <property type="match status" value="1"/>
</dbReference>
<dbReference type="Pfam" id="PF00479">
    <property type="entry name" value="G6PD_N"/>
    <property type="match status" value="1"/>
</dbReference>
<dbReference type="PIRSF" id="PIRSF000110">
    <property type="entry name" value="G6PD"/>
    <property type="match status" value="1"/>
</dbReference>
<dbReference type="PRINTS" id="PR00079">
    <property type="entry name" value="G6PDHDRGNASE"/>
</dbReference>
<dbReference type="SUPFAM" id="SSF55347">
    <property type="entry name" value="Glyceraldehyde-3-phosphate dehydrogenase-like, C-terminal domain"/>
    <property type="match status" value="1"/>
</dbReference>
<dbReference type="SUPFAM" id="SSF51735">
    <property type="entry name" value="NAD(P)-binding Rossmann-fold domains"/>
    <property type="match status" value="1"/>
</dbReference>
<dbReference type="PROSITE" id="PS00069">
    <property type="entry name" value="G6P_DEHYDROGENASE"/>
    <property type="match status" value="1"/>
</dbReference>
<proteinExistence type="evidence at protein level"/>
<sequence length="489" mass="54478">MEHFQQVEPFDYVIFGATGDLTMRKLLPALYNRLRMGQIPDDACIIGAARTELDREAYVARARDALERFLPSDILGPGLVERFLARLDYVTLDSSREGPQWDALKSLLAKAQPDRVRVYYFATAPQLYGSICENLNRYELITPTSRVVLEKPIGTNMATATAINDGVGQYFPEKQIYRIDHYLGKETVQNVLALRFANPLMNAAWSGEHIESVQITAVETVGVEGRAAYYDTSGALRDMIQNHLLQVLCLVAMEAPDSLEADAVRNAKLAVLNALRPITDATAATETVRAQYTAGVVDGENVPGYLEELGKPSATETYAAIRAWVDTPRWKNVPFYIRTAKRSGKKVSEIVVTFRPAATTMFGATPASNRLVLRIQPNEGVDLRLNVKNPALDVFNLRTADLDTSIRMEGGLPFPDSYERLLLDAVRGDPVLFIRRDEVEAAWRWVEPILEAWKHDKAPMQTYSAGSYGPEQATQLLASHGDTWHEASE</sequence>
<accession>Q5FUK8</accession>
<reference key="1">
    <citation type="journal article" date="2005" name="Nat. Biotechnol.">
        <title>Complete genome sequence of the acetic acid bacterium Gluconobacter oxydans.</title>
        <authorList>
            <person name="Prust C."/>
            <person name="Hoffmeister M."/>
            <person name="Liesegang H."/>
            <person name="Wiezer A."/>
            <person name="Fricke W.F."/>
            <person name="Ehrenreich A."/>
            <person name="Gottschalk G."/>
            <person name="Deppenmeier U."/>
        </authorList>
    </citation>
    <scope>NUCLEOTIDE SEQUENCE [LARGE SCALE GENOMIC DNA]</scope>
    <source>
        <strain>621H</strain>
    </source>
</reference>
<reference key="2">
    <citation type="journal article" date="2010" name="Appl. Microbiol. Biotechnol.">
        <title>Characterization of enzymes involved in the central metabolism of Gluconobacter oxydans.</title>
        <authorList>
            <person name="Rauch B."/>
            <person name="Pahlke J."/>
            <person name="Schweiger P."/>
            <person name="Deppenmeier U."/>
        </authorList>
    </citation>
    <scope>FUNCTION</scope>
    <scope>CATALYTIC ACTIVITY</scope>
    <scope>BIOPHYSICOCHEMICAL PROPERTIES</scope>
    <scope>PATHWAY</scope>
    <scope>SUBUNIT</scope>
    <source>
        <strain>621H</strain>
    </source>
</reference>